<comment type="function">
    <text evidence="1">Catalyzes the reversible reaction in which hydroxymethyl group from 5,10-methylenetetrahydrofolate is transferred onto alpha-ketoisovalerate to form ketopantoate.</text>
</comment>
<comment type="catalytic activity">
    <reaction evidence="1">
        <text>3-methyl-2-oxobutanoate + (6R)-5,10-methylene-5,6,7,8-tetrahydrofolate + H2O = 2-dehydropantoate + (6S)-5,6,7,8-tetrahydrofolate</text>
        <dbReference type="Rhea" id="RHEA:11824"/>
        <dbReference type="ChEBI" id="CHEBI:11561"/>
        <dbReference type="ChEBI" id="CHEBI:11851"/>
        <dbReference type="ChEBI" id="CHEBI:15377"/>
        <dbReference type="ChEBI" id="CHEBI:15636"/>
        <dbReference type="ChEBI" id="CHEBI:57453"/>
        <dbReference type="EC" id="2.1.2.11"/>
    </reaction>
</comment>
<comment type="cofactor">
    <cofactor evidence="1">
        <name>Mg(2+)</name>
        <dbReference type="ChEBI" id="CHEBI:18420"/>
    </cofactor>
    <text evidence="1">Binds 1 Mg(2+) ion per subunit.</text>
</comment>
<comment type="pathway">
    <text evidence="1">Cofactor biosynthesis; coenzyme A biosynthesis.</text>
</comment>
<comment type="subunit">
    <text evidence="1">Homodecamer; pentamer of dimers.</text>
</comment>
<comment type="subcellular location">
    <subcellularLocation>
        <location evidence="1">Cytoplasm</location>
    </subcellularLocation>
</comment>
<comment type="similarity">
    <text evidence="1">Belongs to the PanB family.</text>
</comment>
<feature type="chain" id="PRO_0000297426" description="3-methyl-2-oxobutanoate hydroxymethyltransferase">
    <location>
        <begin position="1"/>
        <end position="261"/>
    </location>
</feature>
<feature type="active site" description="Proton acceptor" evidence="1">
    <location>
        <position position="179"/>
    </location>
</feature>
<feature type="binding site" evidence="1">
    <location>
        <begin position="42"/>
        <end position="43"/>
    </location>
    <ligand>
        <name>3-methyl-2-oxobutanoate</name>
        <dbReference type="ChEBI" id="CHEBI:11851"/>
    </ligand>
</feature>
<feature type="binding site" evidence="1">
    <location>
        <position position="42"/>
    </location>
    <ligand>
        <name>Mg(2+)</name>
        <dbReference type="ChEBI" id="CHEBI:18420"/>
    </ligand>
</feature>
<feature type="binding site" evidence="1">
    <location>
        <position position="81"/>
    </location>
    <ligand>
        <name>3-methyl-2-oxobutanoate</name>
        <dbReference type="ChEBI" id="CHEBI:11851"/>
    </ligand>
</feature>
<feature type="binding site" evidence="1">
    <location>
        <position position="81"/>
    </location>
    <ligand>
        <name>Mg(2+)</name>
        <dbReference type="ChEBI" id="CHEBI:18420"/>
    </ligand>
</feature>
<feature type="binding site" evidence="1">
    <location>
        <position position="110"/>
    </location>
    <ligand>
        <name>3-methyl-2-oxobutanoate</name>
        <dbReference type="ChEBI" id="CHEBI:11851"/>
    </ligand>
</feature>
<feature type="binding site" evidence="1">
    <location>
        <position position="112"/>
    </location>
    <ligand>
        <name>Mg(2+)</name>
        <dbReference type="ChEBI" id="CHEBI:18420"/>
    </ligand>
</feature>
<keyword id="KW-0173">Coenzyme A biosynthesis</keyword>
<keyword id="KW-0963">Cytoplasm</keyword>
<keyword id="KW-0460">Magnesium</keyword>
<keyword id="KW-0479">Metal-binding</keyword>
<keyword id="KW-0808">Transferase</keyword>
<organism>
    <name type="scientific">Pyrobaculum islandicum (strain DSM 4184 / JCM 9189 / GEO3)</name>
    <dbReference type="NCBI Taxonomy" id="384616"/>
    <lineage>
        <taxon>Archaea</taxon>
        <taxon>Thermoproteota</taxon>
        <taxon>Thermoprotei</taxon>
        <taxon>Thermoproteales</taxon>
        <taxon>Thermoproteaceae</taxon>
        <taxon>Pyrobaculum</taxon>
    </lineage>
</organism>
<proteinExistence type="inferred from homology"/>
<gene>
    <name evidence="1" type="primary">panB</name>
    <name type="ordered locus">Pisl_1362</name>
</gene>
<name>PANB_PYRIL</name>
<dbReference type="EC" id="2.1.2.11" evidence="1"/>
<dbReference type="EMBL" id="CP000504">
    <property type="protein sequence ID" value="ABL88524.1"/>
    <property type="molecule type" value="Genomic_DNA"/>
</dbReference>
<dbReference type="RefSeq" id="WP_011763099.1">
    <property type="nucleotide sequence ID" value="NC_008701.1"/>
</dbReference>
<dbReference type="SMR" id="A1RU92"/>
<dbReference type="STRING" id="384616.Pisl_1362"/>
<dbReference type="GeneID" id="4616558"/>
<dbReference type="KEGG" id="pis:Pisl_1362"/>
<dbReference type="eggNOG" id="arCOG00584">
    <property type="taxonomic scope" value="Archaea"/>
</dbReference>
<dbReference type="HOGENOM" id="CLU_036645_1_0_2"/>
<dbReference type="OrthoDB" id="8414at2157"/>
<dbReference type="UniPathway" id="UPA00241"/>
<dbReference type="Proteomes" id="UP000002595">
    <property type="component" value="Chromosome"/>
</dbReference>
<dbReference type="GO" id="GO:0005737">
    <property type="term" value="C:cytoplasm"/>
    <property type="evidence" value="ECO:0007669"/>
    <property type="project" value="UniProtKB-SubCell"/>
</dbReference>
<dbReference type="GO" id="GO:0003864">
    <property type="term" value="F:3-methyl-2-oxobutanoate hydroxymethyltransferase activity"/>
    <property type="evidence" value="ECO:0007669"/>
    <property type="project" value="UniProtKB-UniRule"/>
</dbReference>
<dbReference type="GO" id="GO:0000287">
    <property type="term" value="F:magnesium ion binding"/>
    <property type="evidence" value="ECO:0007669"/>
    <property type="project" value="TreeGrafter"/>
</dbReference>
<dbReference type="GO" id="GO:0015937">
    <property type="term" value="P:coenzyme A biosynthetic process"/>
    <property type="evidence" value="ECO:0007669"/>
    <property type="project" value="UniProtKB-UniRule"/>
</dbReference>
<dbReference type="GO" id="GO:0015940">
    <property type="term" value="P:pantothenate biosynthetic process"/>
    <property type="evidence" value="ECO:0007669"/>
    <property type="project" value="InterPro"/>
</dbReference>
<dbReference type="CDD" id="cd06557">
    <property type="entry name" value="KPHMT-like"/>
    <property type="match status" value="1"/>
</dbReference>
<dbReference type="FunFam" id="3.20.20.60:FF:000003">
    <property type="entry name" value="3-methyl-2-oxobutanoate hydroxymethyltransferase"/>
    <property type="match status" value="1"/>
</dbReference>
<dbReference type="Gene3D" id="3.20.20.60">
    <property type="entry name" value="Phosphoenolpyruvate-binding domains"/>
    <property type="match status" value="1"/>
</dbReference>
<dbReference type="HAMAP" id="MF_00156">
    <property type="entry name" value="PanB"/>
    <property type="match status" value="1"/>
</dbReference>
<dbReference type="InterPro" id="IPR003700">
    <property type="entry name" value="Pantoate_hydroxy_MeTrfase"/>
</dbReference>
<dbReference type="InterPro" id="IPR015813">
    <property type="entry name" value="Pyrv/PenolPyrv_kinase-like_dom"/>
</dbReference>
<dbReference type="InterPro" id="IPR040442">
    <property type="entry name" value="Pyrv_kinase-like_dom_sf"/>
</dbReference>
<dbReference type="NCBIfam" id="TIGR00222">
    <property type="entry name" value="panB"/>
    <property type="match status" value="1"/>
</dbReference>
<dbReference type="NCBIfam" id="NF001452">
    <property type="entry name" value="PRK00311.1"/>
    <property type="match status" value="1"/>
</dbReference>
<dbReference type="PANTHER" id="PTHR20881">
    <property type="entry name" value="3-METHYL-2-OXOBUTANOATE HYDROXYMETHYLTRANSFERASE"/>
    <property type="match status" value="1"/>
</dbReference>
<dbReference type="PANTHER" id="PTHR20881:SF0">
    <property type="entry name" value="3-METHYL-2-OXOBUTANOATE HYDROXYMETHYLTRANSFERASE"/>
    <property type="match status" value="1"/>
</dbReference>
<dbReference type="Pfam" id="PF02548">
    <property type="entry name" value="Pantoate_transf"/>
    <property type="match status" value="1"/>
</dbReference>
<dbReference type="PIRSF" id="PIRSF000388">
    <property type="entry name" value="Pantoate_hydroxy_MeTrfase"/>
    <property type="match status" value="1"/>
</dbReference>
<dbReference type="SUPFAM" id="SSF51621">
    <property type="entry name" value="Phosphoenolpyruvate/pyruvate domain"/>
    <property type="match status" value="1"/>
</dbReference>
<sequence>MRRKTVLDFAKGRGPYVWITAYDYPTAKAVDEAGVDGILVGDSLGMVLLGLPNTLGVTMEDMVRHTEAVARAKPRALVVADMPFMSYETGPEDALKNAARLIRAGADAVKLEGGAEYAHIVERLVKAGIPVMGHIGLTPQRVLTIGGFRMVGKTEEQRRKVLEDAKALRDAGAFSIVLEFVPASLAREVTQAVDIPTICIGSGPHCDGQILVLHDVIGLSERPPSFAKRYADVAAAIREAVSKYAEEVRKGLFPAREHYRE</sequence>
<evidence type="ECO:0000255" key="1">
    <source>
        <dbReference type="HAMAP-Rule" id="MF_00156"/>
    </source>
</evidence>
<reference key="1">
    <citation type="submission" date="2006-12" db="EMBL/GenBank/DDBJ databases">
        <title>Complete sequence of Pyrobaculum islandicum DSM 4184.</title>
        <authorList>
            <person name="Copeland A."/>
            <person name="Lucas S."/>
            <person name="Lapidus A."/>
            <person name="Barry K."/>
            <person name="Detter J.C."/>
            <person name="Glavina del Rio T."/>
            <person name="Dalin E."/>
            <person name="Tice H."/>
            <person name="Pitluck S."/>
            <person name="Meincke L."/>
            <person name="Brettin T."/>
            <person name="Bruce D."/>
            <person name="Han C."/>
            <person name="Tapia R."/>
            <person name="Gilna P."/>
            <person name="Schmutz J."/>
            <person name="Larimer F."/>
            <person name="Land M."/>
            <person name="Hauser L."/>
            <person name="Kyrpides N."/>
            <person name="Mikhailova N."/>
            <person name="Cozen A.E."/>
            <person name="Fitz-Gibbon S.T."/>
            <person name="House C.H."/>
            <person name="Saltikov C."/>
            <person name="Lowe T."/>
            <person name="Richardson P."/>
        </authorList>
    </citation>
    <scope>NUCLEOTIDE SEQUENCE [LARGE SCALE GENOMIC DNA]</scope>
    <source>
        <strain>DSM 4184 / JCM 9189 / GEO3</strain>
    </source>
</reference>
<accession>A1RU92</accession>
<protein>
    <recommendedName>
        <fullName evidence="1">3-methyl-2-oxobutanoate hydroxymethyltransferase</fullName>
        <ecNumber evidence="1">2.1.2.11</ecNumber>
    </recommendedName>
    <alternativeName>
        <fullName evidence="1">Ketopantoate hydroxymethyltransferase</fullName>
        <shortName evidence="1">KPHMT</shortName>
    </alternativeName>
</protein>